<keyword id="KW-0520">NAD</keyword>
<keyword id="KW-0560">Oxidoreductase</keyword>
<keyword id="KW-0816">Tricarboxylic acid cycle</keyword>
<name>MDH_BRUSI</name>
<feature type="chain" id="PRO_1000081355" description="Malate dehydrogenase">
    <location>
        <begin position="1"/>
        <end position="320"/>
    </location>
</feature>
<feature type="active site" description="Proton acceptor" evidence="1">
    <location>
        <position position="176"/>
    </location>
</feature>
<feature type="binding site" evidence="1">
    <location>
        <begin position="10"/>
        <end position="15"/>
    </location>
    <ligand>
        <name>NAD(+)</name>
        <dbReference type="ChEBI" id="CHEBI:57540"/>
    </ligand>
</feature>
<feature type="binding site" evidence="1">
    <location>
        <position position="34"/>
    </location>
    <ligand>
        <name>NAD(+)</name>
        <dbReference type="ChEBI" id="CHEBI:57540"/>
    </ligand>
</feature>
<feature type="binding site" evidence="1">
    <location>
        <position position="83"/>
    </location>
    <ligand>
        <name>substrate</name>
    </ligand>
</feature>
<feature type="binding site" evidence="1">
    <location>
        <position position="89"/>
    </location>
    <ligand>
        <name>substrate</name>
    </ligand>
</feature>
<feature type="binding site" evidence="1">
    <location>
        <position position="96"/>
    </location>
    <ligand>
        <name>NAD(+)</name>
        <dbReference type="ChEBI" id="CHEBI:57540"/>
    </ligand>
</feature>
<feature type="binding site" evidence="1">
    <location>
        <begin position="119"/>
        <end position="121"/>
    </location>
    <ligand>
        <name>NAD(+)</name>
        <dbReference type="ChEBI" id="CHEBI:57540"/>
    </ligand>
</feature>
<feature type="binding site" evidence="1">
    <location>
        <position position="121"/>
    </location>
    <ligand>
        <name>substrate</name>
    </ligand>
</feature>
<feature type="binding site" evidence="1">
    <location>
        <position position="152"/>
    </location>
    <ligand>
        <name>substrate</name>
    </ligand>
</feature>
<organism>
    <name type="scientific">Brucella suis (strain ATCC 23445 / NCTC 10510)</name>
    <dbReference type="NCBI Taxonomy" id="470137"/>
    <lineage>
        <taxon>Bacteria</taxon>
        <taxon>Pseudomonadati</taxon>
        <taxon>Pseudomonadota</taxon>
        <taxon>Alphaproteobacteria</taxon>
        <taxon>Hyphomicrobiales</taxon>
        <taxon>Brucellaceae</taxon>
        <taxon>Brucella/Ochrobactrum group</taxon>
        <taxon>Brucella</taxon>
    </lineage>
</organism>
<comment type="function">
    <text evidence="1">Catalyzes the reversible oxidation of malate to oxaloacetate.</text>
</comment>
<comment type="catalytic activity">
    <reaction evidence="1">
        <text>(S)-malate + NAD(+) = oxaloacetate + NADH + H(+)</text>
        <dbReference type="Rhea" id="RHEA:21432"/>
        <dbReference type="ChEBI" id="CHEBI:15378"/>
        <dbReference type="ChEBI" id="CHEBI:15589"/>
        <dbReference type="ChEBI" id="CHEBI:16452"/>
        <dbReference type="ChEBI" id="CHEBI:57540"/>
        <dbReference type="ChEBI" id="CHEBI:57945"/>
        <dbReference type="EC" id="1.1.1.37"/>
    </reaction>
</comment>
<comment type="similarity">
    <text evidence="1">Belongs to the LDH/MDH superfamily. MDH type 3 family.</text>
</comment>
<protein>
    <recommendedName>
        <fullName evidence="1">Malate dehydrogenase</fullName>
        <ecNumber evidence="1">1.1.1.37</ecNumber>
    </recommendedName>
</protein>
<gene>
    <name evidence="1" type="primary">mdh</name>
    <name type="ordered locus">BSUIS_A1767</name>
</gene>
<evidence type="ECO:0000255" key="1">
    <source>
        <dbReference type="HAMAP-Rule" id="MF_00487"/>
    </source>
</evidence>
<proteinExistence type="inferred from homology"/>
<accession>B0CIT1</accession>
<sequence>MARNKIALIGSGMIGGTLAHLAGLKELGDVVLFDIAEGTPQGKGLDIAESSPVDGFDAKFTGANDYVAIEGADVVIVTAGVPRKPGMSRDDLLGINLKVMEQVGAGIKKYAPEAFVICITNPLDAMVWALQKFSGLPAHKVVGMAGVLDSARFRYFLSEEFNVSVEDVTAFVLGGHGDSMVPLARYSTVAGIPLPDLVKMGWTSQDKLDKIIQRTRDGGAEIVGLLKTGSAFYAPAASAIQVAESYLKDKKRVLPVAAQLSGQYGVKDMYVGVPTVIGANGVERIIEIDLDKDEKAQFDKSVASVAGLCEACIGIAPSLK</sequence>
<reference key="1">
    <citation type="submission" date="2007-12" db="EMBL/GenBank/DDBJ databases">
        <title>Brucella suis ATCC 23445 whole genome shotgun sequencing project.</title>
        <authorList>
            <person name="Setubal J.C."/>
            <person name="Bowns C."/>
            <person name="Boyle S."/>
            <person name="Crasta O.R."/>
            <person name="Czar M.J."/>
            <person name="Dharmanolla C."/>
            <person name="Gillespie J.J."/>
            <person name="Kenyon R.W."/>
            <person name="Lu J."/>
            <person name="Mane S."/>
            <person name="Mohapatra S."/>
            <person name="Nagrani S."/>
            <person name="Purkayastha A."/>
            <person name="Rajasimha H.K."/>
            <person name="Shallom J.M."/>
            <person name="Shallom S."/>
            <person name="Shukla M."/>
            <person name="Snyder E.E."/>
            <person name="Sobral B.W."/>
            <person name="Wattam A.R."/>
            <person name="Will R."/>
            <person name="Williams K."/>
            <person name="Yoo H."/>
            <person name="Bruce D."/>
            <person name="Detter C."/>
            <person name="Munk C."/>
            <person name="Brettin T.S."/>
        </authorList>
    </citation>
    <scope>NUCLEOTIDE SEQUENCE [LARGE SCALE GENOMIC DNA]</scope>
    <source>
        <strain>ATCC 23445 / NCTC 10510</strain>
    </source>
</reference>
<dbReference type="EC" id="1.1.1.37" evidence="1"/>
<dbReference type="EMBL" id="CP000911">
    <property type="protein sequence ID" value="ABY38784.1"/>
    <property type="molecule type" value="Genomic_DNA"/>
</dbReference>
<dbReference type="RefSeq" id="WP_006071650.1">
    <property type="nucleotide sequence ID" value="NC_010169.1"/>
</dbReference>
<dbReference type="SMR" id="B0CIT1"/>
<dbReference type="KEGG" id="bmt:BSUIS_A1767"/>
<dbReference type="HOGENOM" id="CLU_045401_2_1_5"/>
<dbReference type="Proteomes" id="UP000008545">
    <property type="component" value="Chromosome I"/>
</dbReference>
<dbReference type="GO" id="GO:0004459">
    <property type="term" value="F:L-lactate dehydrogenase activity"/>
    <property type="evidence" value="ECO:0007669"/>
    <property type="project" value="TreeGrafter"/>
</dbReference>
<dbReference type="GO" id="GO:0030060">
    <property type="term" value="F:L-malate dehydrogenase (NAD+) activity"/>
    <property type="evidence" value="ECO:0007669"/>
    <property type="project" value="UniProtKB-UniRule"/>
</dbReference>
<dbReference type="GO" id="GO:0006089">
    <property type="term" value="P:lactate metabolic process"/>
    <property type="evidence" value="ECO:0007669"/>
    <property type="project" value="TreeGrafter"/>
</dbReference>
<dbReference type="GO" id="GO:0006099">
    <property type="term" value="P:tricarboxylic acid cycle"/>
    <property type="evidence" value="ECO:0007669"/>
    <property type="project" value="UniProtKB-UniRule"/>
</dbReference>
<dbReference type="CDD" id="cd01339">
    <property type="entry name" value="LDH-like_MDH"/>
    <property type="match status" value="1"/>
</dbReference>
<dbReference type="FunFam" id="3.40.50.720:FF:000018">
    <property type="entry name" value="Malate dehydrogenase"/>
    <property type="match status" value="1"/>
</dbReference>
<dbReference type="FunFam" id="3.90.110.10:FF:000004">
    <property type="entry name" value="Malate dehydrogenase"/>
    <property type="match status" value="1"/>
</dbReference>
<dbReference type="Gene3D" id="3.90.110.10">
    <property type="entry name" value="Lactate dehydrogenase/glycoside hydrolase, family 4, C-terminal"/>
    <property type="match status" value="1"/>
</dbReference>
<dbReference type="Gene3D" id="3.40.50.720">
    <property type="entry name" value="NAD(P)-binding Rossmann-like Domain"/>
    <property type="match status" value="1"/>
</dbReference>
<dbReference type="HAMAP" id="MF_00487">
    <property type="entry name" value="Malate_dehydrog_3"/>
    <property type="match status" value="1"/>
</dbReference>
<dbReference type="InterPro" id="IPR001557">
    <property type="entry name" value="L-lactate/malate_DH"/>
</dbReference>
<dbReference type="InterPro" id="IPR022383">
    <property type="entry name" value="Lactate/malate_DH_C"/>
</dbReference>
<dbReference type="InterPro" id="IPR001236">
    <property type="entry name" value="Lactate/malate_DH_N"/>
</dbReference>
<dbReference type="InterPro" id="IPR015955">
    <property type="entry name" value="Lactate_DH/Glyco_Ohase_4_C"/>
</dbReference>
<dbReference type="InterPro" id="IPR011275">
    <property type="entry name" value="Malate_DH_type3"/>
</dbReference>
<dbReference type="InterPro" id="IPR036291">
    <property type="entry name" value="NAD(P)-bd_dom_sf"/>
</dbReference>
<dbReference type="NCBIfam" id="TIGR01763">
    <property type="entry name" value="MalateDH_bact"/>
    <property type="match status" value="1"/>
</dbReference>
<dbReference type="NCBIfam" id="NF004863">
    <property type="entry name" value="PRK06223.1"/>
    <property type="match status" value="1"/>
</dbReference>
<dbReference type="PANTHER" id="PTHR43128">
    <property type="entry name" value="L-2-HYDROXYCARBOXYLATE DEHYDROGENASE (NAD(P)(+))"/>
    <property type="match status" value="1"/>
</dbReference>
<dbReference type="PANTHER" id="PTHR43128:SF16">
    <property type="entry name" value="L-LACTATE DEHYDROGENASE"/>
    <property type="match status" value="1"/>
</dbReference>
<dbReference type="Pfam" id="PF02866">
    <property type="entry name" value="Ldh_1_C"/>
    <property type="match status" value="1"/>
</dbReference>
<dbReference type="Pfam" id="PF00056">
    <property type="entry name" value="Ldh_1_N"/>
    <property type="match status" value="1"/>
</dbReference>
<dbReference type="PIRSF" id="PIRSF000102">
    <property type="entry name" value="Lac_mal_DH"/>
    <property type="match status" value="1"/>
</dbReference>
<dbReference type="PRINTS" id="PR00086">
    <property type="entry name" value="LLDHDRGNASE"/>
</dbReference>
<dbReference type="SUPFAM" id="SSF56327">
    <property type="entry name" value="LDH C-terminal domain-like"/>
    <property type="match status" value="1"/>
</dbReference>
<dbReference type="SUPFAM" id="SSF51735">
    <property type="entry name" value="NAD(P)-binding Rossmann-fold domains"/>
    <property type="match status" value="1"/>
</dbReference>